<sequence>MAKNLILWLVIAVVLMSVFQSFGPSESNGRKVDYSTFLQEVNQDQVREARINGREINVTKKDSNRYTTYIPINDPKLLDNLLTKNVKVVGEPPEEPSLLASIFISWFPMLLLIGVWIFFMRQMQGGGGKGAMSFGKSKARMLTEDQIKTTFADVAGCDEAKEEVAELVEYLREPSRFQKLGGKIPKGVLMVGPPGTGKTLLAKAIAGEAKVPFFTISGSDFVEMFVGVGASRVRDMFEQAKKAAPCIIFIDEIDAVGRQRGAGLGGGHDEREQTLNQMLVEMDGFEGNEGIIVIAATNRPDVLDPALLRPGRFDRQVVVGLPDVRGREQILKVHMRRVPLATDIDAAIIARGTPGFSGADLANLVNEAALFAARGNKRVVSMVEFEKAKDKIMMGAERRSMVMTEAQKESTAYHEAGHAIIGRLVPEHDPVHKVTIIPRGRALGVTFFLPEGDAISASRQKLESQISTLYGGRLAEEIIYGVEHVSTGASNDIKVATNLARNMVTQWGFSEKLGPLLYAEEEGEVFLGRSVAKAKHMSDETARIIDQEVKALIERNYNRARQILTDNMDILHAMKDALMKYETIDAPQIDDLMARREVRPPAGWEDPNGTNNSDSNGTPQAPRPVDEPRTPNPGNTMSEQLGDK</sequence>
<keyword id="KW-0067">ATP-binding</keyword>
<keyword id="KW-0997">Cell inner membrane</keyword>
<keyword id="KW-1003">Cell membrane</keyword>
<keyword id="KW-0378">Hydrolase</keyword>
<keyword id="KW-0472">Membrane</keyword>
<keyword id="KW-0479">Metal-binding</keyword>
<keyword id="KW-0482">Metalloprotease</keyword>
<keyword id="KW-0547">Nucleotide-binding</keyword>
<keyword id="KW-0645">Protease</keyword>
<keyword id="KW-0812">Transmembrane</keyword>
<keyword id="KW-1133">Transmembrane helix</keyword>
<keyword id="KW-0862">Zinc</keyword>
<evidence type="ECO:0000255" key="1">
    <source>
        <dbReference type="HAMAP-Rule" id="MF_01458"/>
    </source>
</evidence>
<evidence type="ECO:0000256" key="2">
    <source>
        <dbReference type="SAM" id="MobiDB-lite"/>
    </source>
</evidence>
<accession>P63344</accession>
<accession>Q8XGY2</accession>
<organism>
    <name type="scientific">Salmonella typhi</name>
    <dbReference type="NCBI Taxonomy" id="90370"/>
    <lineage>
        <taxon>Bacteria</taxon>
        <taxon>Pseudomonadati</taxon>
        <taxon>Pseudomonadota</taxon>
        <taxon>Gammaproteobacteria</taxon>
        <taxon>Enterobacterales</taxon>
        <taxon>Enterobacteriaceae</taxon>
        <taxon>Salmonella</taxon>
    </lineage>
</organism>
<proteinExistence type="inferred from homology"/>
<comment type="function">
    <text evidence="1">Acts as a processive, ATP-dependent zinc metallopeptidase for both cytoplasmic and membrane proteins. Plays a role in the quality control of integral membrane proteins.</text>
</comment>
<comment type="cofactor">
    <cofactor evidence="1">
        <name>Zn(2+)</name>
        <dbReference type="ChEBI" id="CHEBI:29105"/>
    </cofactor>
    <text evidence="1">Binds 1 zinc ion per subunit.</text>
</comment>
<comment type="subunit">
    <text evidence="1">Homohexamer.</text>
</comment>
<comment type="subcellular location">
    <subcellularLocation>
        <location evidence="1">Cell inner membrane</location>
        <topology evidence="1">Multi-pass membrane protein</topology>
        <orientation evidence="1">Cytoplasmic side</orientation>
    </subcellularLocation>
</comment>
<comment type="similarity">
    <text evidence="1">In the central section; belongs to the AAA ATPase family.</text>
</comment>
<comment type="similarity">
    <text evidence="1">In the C-terminal section; belongs to the peptidase M41 family.</text>
</comment>
<gene>
    <name evidence="1" type="primary">ftsH</name>
    <name type="synonym">hflB</name>
    <name type="ordered locus">STY3474</name>
    <name type="ordered locus">t3213</name>
</gene>
<dbReference type="EC" id="3.4.24.-" evidence="1"/>
<dbReference type="EMBL" id="AL513382">
    <property type="protein sequence ID" value="CAD07813.1"/>
    <property type="molecule type" value="Genomic_DNA"/>
</dbReference>
<dbReference type="EMBL" id="AE014613">
    <property type="protein sequence ID" value="AAO70749.1"/>
    <property type="molecule type" value="Genomic_DNA"/>
</dbReference>
<dbReference type="RefSeq" id="NP_457675.1">
    <property type="nucleotide sequence ID" value="NC_003198.1"/>
</dbReference>
<dbReference type="RefSeq" id="WP_001107481.1">
    <property type="nucleotide sequence ID" value="NZ_WSUR01000003.1"/>
</dbReference>
<dbReference type="SMR" id="P63344"/>
<dbReference type="STRING" id="220341.gene:17587326"/>
<dbReference type="MEROPS" id="M41.001"/>
<dbReference type="GeneID" id="66757635"/>
<dbReference type="KEGG" id="stt:t3213"/>
<dbReference type="KEGG" id="sty:STY3474"/>
<dbReference type="PATRIC" id="fig|220341.7.peg.3537"/>
<dbReference type="eggNOG" id="COG0465">
    <property type="taxonomic scope" value="Bacteria"/>
</dbReference>
<dbReference type="HOGENOM" id="CLU_000688_16_0_6"/>
<dbReference type="OMA" id="LFLMNQM"/>
<dbReference type="OrthoDB" id="9809379at2"/>
<dbReference type="Proteomes" id="UP000000541">
    <property type="component" value="Chromosome"/>
</dbReference>
<dbReference type="Proteomes" id="UP000002670">
    <property type="component" value="Chromosome"/>
</dbReference>
<dbReference type="GO" id="GO:0005886">
    <property type="term" value="C:plasma membrane"/>
    <property type="evidence" value="ECO:0007669"/>
    <property type="project" value="UniProtKB-SubCell"/>
</dbReference>
<dbReference type="GO" id="GO:0005524">
    <property type="term" value="F:ATP binding"/>
    <property type="evidence" value="ECO:0007669"/>
    <property type="project" value="UniProtKB-UniRule"/>
</dbReference>
<dbReference type="GO" id="GO:0016887">
    <property type="term" value="F:ATP hydrolysis activity"/>
    <property type="evidence" value="ECO:0007669"/>
    <property type="project" value="UniProtKB-UniRule"/>
</dbReference>
<dbReference type="GO" id="GO:0004176">
    <property type="term" value="F:ATP-dependent peptidase activity"/>
    <property type="evidence" value="ECO:0007669"/>
    <property type="project" value="InterPro"/>
</dbReference>
<dbReference type="GO" id="GO:0004222">
    <property type="term" value="F:metalloendopeptidase activity"/>
    <property type="evidence" value="ECO:0007669"/>
    <property type="project" value="InterPro"/>
</dbReference>
<dbReference type="GO" id="GO:0008270">
    <property type="term" value="F:zinc ion binding"/>
    <property type="evidence" value="ECO:0007669"/>
    <property type="project" value="UniProtKB-UniRule"/>
</dbReference>
<dbReference type="GO" id="GO:0030163">
    <property type="term" value="P:protein catabolic process"/>
    <property type="evidence" value="ECO:0007669"/>
    <property type="project" value="UniProtKB-UniRule"/>
</dbReference>
<dbReference type="GO" id="GO:0006508">
    <property type="term" value="P:proteolysis"/>
    <property type="evidence" value="ECO:0007669"/>
    <property type="project" value="UniProtKB-KW"/>
</dbReference>
<dbReference type="CDD" id="cd19501">
    <property type="entry name" value="RecA-like_FtsH"/>
    <property type="match status" value="1"/>
</dbReference>
<dbReference type="FunFam" id="1.10.8.60:FF:000001">
    <property type="entry name" value="ATP-dependent zinc metalloprotease FtsH"/>
    <property type="match status" value="1"/>
</dbReference>
<dbReference type="FunFam" id="1.20.58.760:FF:000001">
    <property type="entry name" value="ATP-dependent zinc metalloprotease FtsH"/>
    <property type="match status" value="1"/>
</dbReference>
<dbReference type="FunFam" id="3.30.720.210:FF:000001">
    <property type="entry name" value="ATP-dependent zinc metalloprotease FtsH"/>
    <property type="match status" value="1"/>
</dbReference>
<dbReference type="FunFam" id="3.40.50.300:FF:000001">
    <property type="entry name" value="ATP-dependent zinc metalloprotease FtsH"/>
    <property type="match status" value="1"/>
</dbReference>
<dbReference type="Gene3D" id="1.10.8.60">
    <property type="match status" value="1"/>
</dbReference>
<dbReference type="Gene3D" id="3.30.720.210">
    <property type="match status" value="1"/>
</dbReference>
<dbReference type="Gene3D" id="3.40.50.300">
    <property type="entry name" value="P-loop containing nucleotide triphosphate hydrolases"/>
    <property type="match status" value="1"/>
</dbReference>
<dbReference type="Gene3D" id="1.20.58.760">
    <property type="entry name" value="Peptidase M41"/>
    <property type="match status" value="1"/>
</dbReference>
<dbReference type="HAMAP" id="MF_01458">
    <property type="entry name" value="FtsH"/>
    <property type="match status" value="1"/>
</dbReference>
<dbReference type="InterPro" id="IPR003593">
    <property type="entry name" value="AAA+_ATPase"/>
</dbReference>
<dbReference type="InterPro" id="IPR041569">
    <property type="entry name" value="AAA_lid_3"/>
</dbReference>
<dbReference type="InterPro" id="IPR003959">
    <property type="entry name" value="ATPase_AAA_core"/>
</dbReference>
<dbReference type="InterPro" id="IPR003960">
    <property type="entry name" value="ATPase_AAA_CS"/>
</dbReference>
<dbReference type="InterPro" id="IPR005936">
    <property type="entry name" value="FtsH"/>
</dbReference>
<dbReference type="InterPro" id="IPR027417">
    <property type="entry name" value="P-loop_NTPase"/>
</dbReference>
<dbReference type="InterPro" id="IPR011546">
    <property type="entry name" value="Pept_M41_FtsH_extracell"/>
</dbReference>
<dbReference type="InterPro" id="IPR000642">
    <property type="entry name" value="Peptidase_M41"/>
</dbReference>
<dbReference type="InterPro" id="IPR037219">
    <property type="entry name" value="Peptidase_M41-like"/>
</dbReference>
<dbReference type="NCBIfam" id="TIGR01241">
    <property type="entry name" value="FtsH_fam"/>
    <property type="match status" value="1"/>
</dbReference>
<dbReference type="NCBIfam" id="NF008004">
    <property type="entry name" value="PRK10733.1"/>
    <property type="match status" value="1"/>
</dbReference>
<dbReference type="PANTHER" id="PTHR23076:SF97">
    <property type="entry name" value="ATP-DEPENDENT ZINC METALLOPROTEASE YME1L1"/>
    <property type="match status" value="1"/>
</dbReference>
<dbReference type="PANTHER" id="PTHR23076">
    <property type="entry name" value="METALLOPROTEASE M41 FTSH"/>
    <property type="match status" value="1"/>
</dbReference>
<dbReference type="Pfam" id="PF00004">
    <property type="entry name" value="AAA"/>
    <property type="match status" value="1"/>
</dbReference>
<dbReference type="Pfam" id="PF17862">
    <property type="entry name" value="AAA_lid_3"/>
    <property type="match status" value="1"/>
</dbReference>
<dbReference type="Pfam" id="PF06480">
    <property type="entry name" value="FtsH_ext"/>
    <property type="match status" value="1"/>
</dbReference>
<dbReference type="Pfam" id="PF01434">
    <property type="entry name" value="Peptidase_M41"/>
    <property type="match status" value="1"/>
</dbReference>
<dbReference type="SMART" id="SM00382">
    <property type="entry name" value="AAA"/>
    <property type="match status" value="1"/>
</dbReference>
<dbReference type="SUPFAM" id="SSF140990">
    <property type="entry name" value="FtsH protease domain-like"/>
    <property type="match status" value="1"/>
</dbReference>
<dbReference type="SUPFAM" id="SSF52540">
    <property type="entry name" value="P-loop containing nucleoside triphosphate hydrolases"/>
    <property type="match status" value="1"/>
</dbReference>
<dbReference type="PROSITE" id="PS00674">
    <property type="entry name" value="AAA"/>
    <property type="match status" value="1"/>
</dbReference>
<name>FTSH_SALTI</name>
<reference key="1">
    <citation type="journal article" date="2001" name="Nature">
        <title>Complete genome sequence of a multiple drug resistant Salmonella enterica serovar Typhi CT18.</title>
        <authorList>
            <person name="Parkhill J."/>
            <person name="Dougan G."/>
            <person name="James K.D."/>
            <person name="Thomson N.R."/>
            <person name="Pickard D."/>
            <person name="Wain J."/>
            <person name="Churcher C.M."/>
            <person name="Mungall K.L."/>
            <person name="Bentley S.D."/>
            <person name="Holden M.T.G."/>
            <person name="Sebaihia M."/>
            <person name="Baker S."/>
            <person name="Basham D."/>
            <person name="Brooks K."/>
            <person name="Chillingworth T."/>
            <person name="Connerton P."/>
            <person name="Cronin A."/>
            <person name="Davis P."/>
            <person name="Davies R.M."/>
            <person name="Dowd L."/>
            <person name="White N."/>
            <person name="Farrar J."/>
            <person name="Feltwell T."/>
            <person name="Hamlin N."/>
            <person name="Haque A."/>
            <person name="Hien T.T."/>
            <person name="Holroyd S."/>
            <person name="Jagels K."/>
            <person name="Krogh A."/>
            <person name="Larsen T.S."/>
            <person name="Leather S."/>
            <person name="Moule S."/>
            <person name="O'Gaora P."/>
            <person name="Parry C."/>
            <person name="Quail M.A."/>
            <person name="Rutherford K.M."/>
            <person name="Simmonds M."/>
            <person name="Skelton J."/>
            <person name="Stevens K."/>
            <person name="Whitehead S."/>
            <person name="Barrell B.G."/>
        </authorList>
    </citation>
    <scope>NUCLEOTIDE SEQUENCE [LARGE SCALE GENOMIC DNA]</scope>
    <source>
        <strain>CT18</strain>
    </source>
</reference>
<reference key="2">
    <citation type="journal article" date="2003" name="J. Bacteriol.">
        <title>Comparative genomics of Salmonella enterica serovar Typhi strains Ty2 and CT18.</title>
        <authorList>
            <person name="Deng W."/>
            <person name="Liou S.-R."/>
            <person name="Plunkett G. III"/>
            <person name="Mayhew G.F."/>
            <person name="Rose D.J."/>
            <person name="Burland V."/>
            <person name="Kodoyianni V."/>
            <person name="Schwartz D.C."/>
            <person name="Blattner F.R."/>
        </authorList>
    </citation>
    <scope>NUCLEOTIDE SEQUENCE [LARGE SCALE GENOMIC DNA]</scope>
    <source>
        <strain>ATCC 700931 / Ty2</strain>
    </source>
</reference>
<feature type="chain" id="PRO_0000084647" description="ATP-dependent zinc metalloprotease FtsH">
    <location>
        <begin position="1"/>
        <end position="644"/>
    </location>
</feature>
<feature type="topological domain" description="Cytoplasmic" evidence="1">
    <location>
        <begin position="1"/>
        <end position="4"/>
    </location>
</feature>
<feature type="transmembrane region" description="Helical" evidence="1">
    <location>
        <begin position="5"/>
        <end position="25"/>
    </location>
</feature>
<feature type="topological domain" description="Periplasmic" evidence="1">
    <location>
        <begin position="26"/>
        <end position="98"/>
    </location>
</feature>
<feature type="transmembrane region" description="Helical" evidence="1">
    <location>
        <begin position="99"/>
        <end position="119"/>
    </location>
</feature>
<feature type="topological domain" description="Cytoplasmic" evidence="1">
    <location>
        <begin position="120"/>
        <end position="644"/>
    </location>
</feature>
<feature type="region of interest" description="Disordered" evidence="2">
    <location>
        <begin position="599"/>
        <end position="644"/>
    </location>
</feature>
<feature type="compositionally biased region" description="Polar residues" evidence="2">
    <location>
        <begin position="608"/>
        <end position="619"/>
    </location>
</feature>
<feature type="compositionally biased region" description="Polar residues" evidence="2">
    <location>
        <begin position="632"/>
        <end position="644"/>
    </location>
</feature>
<feature type="active site" evidence="1">
    <location>
        <position position="415"/>
    </location>
</feature>
<feature type="binding site" evidence="1">
    <location>
        <begin position="192"/>
        <end position="199"/>
    </location>
    <ligand>
        <name>ATP</name>
        <dbReference type="ChEBI" id="CHEBI:30616"/>
    </ligand>
</feature>
<feature type="binding site" evidence="1">
    <location>
        <position position="414"/>
    </location>
    <ligand>
        <name>Zn(2+)</name>
        <dbReference type="ChEBI" id="CHEBI:29105"/>
        <note>catalytic</note>
    </ligand>
</feature>
<feature type="binding site" evidence="1">
    <location>
        <position position="418"/>
    </location>
    <ligand>
        <name>Zn(2+)</name>
        <dbReference type="ChEBI" id="CHEBI:29105"/>
        <note>catalytic</note>
    </ligand>
</feature>
<feature type="binding site" evidence="1">
    <location>
        <position position="492"/>
    </location>
    <ligand>
        <name>Zn(2+)</name>
        <dbReference type="ChEBI" id="CHEBI:29105"/>
        <note>catalytic</note>
    </ligand>
</feature>
<protein>
    <recommendedName>
        <fullName evidence="1">ATP-dependent zinc metalloprotease FtsH</fullName>
        <ecNumber evidence="1">3.4.24.-</ecNumber>
    </recommendedName>
</protein>